<keyword id="KW-0472">Membrane</keyword>
<keyword id="KW-0520">NAD</keyword>
<keyword id="KW-0521">NADP</keyword>
<keyword id="KW-0618">Plastoquinone</keyword>
<keyword id="KW-0874">Quinone</keyword>
<keyword id="KW-0793">Thylakoid</keyword>
<keyword id="KW-1278">Translocase</keyword>
<keyword id="KW-0813">Transport</keyword>
<protein>
    <recommendedName>
        <fullName evidence="1">NAD(P)H-quinone oxidoreductase subunit M</fullName>
        <ecNumber evidence="1">7.1.1.-</ecNumber>
    </recommendedName>
    <alternativeName>
        <fullName evidence="1">NAD(P)H dehydrogenase I subunit M</fullName>
        <shortName evidence="1">NDH-1 subunit M</shortName>
        <shortName evidence="1">NDH-M</shortName>
    </alternativeName>
</protein>
<feature type="chain" id="PRO_0000352186" description="NAD(P)H-quinone oxidoreductase subunit M">
    <location>
        <begin position="1"/>
        <end position="115"/>
    </location>
</feature>
<sequence length="115" mass="13489">MEKMLLKSTTRHVRIFTAEVVDEELKFHPNKLTLDLDPDNEFIWNEDSLNKINEKFNELIKERAGKDLDDYELRKIGSEIEGLIKFLLQNGQLSYNPDCRVMNYSMGLPKTNEVL</sequence>
<proteinExistence type="inferred from homology"/>
<reference key="1">
    <citation type="journal article" date="2007" name="PLoS Genet.">
        <title>Patterns and implications of gene gain and loss in the evolution of Prochlorococcus.</title>
        <authorList>
            <person name="Kettler G.C."/>
            <person name="Martiny A.C."/>
            <person name="Huang K."/>
            <person name="Zucker J."/>
            <person name="Coleman M.L."/>
            <person name="Rodrigue S."/>
            <person name="Chen F."/>
            <person name="Lapidus A."/>
            <person name="Ferriera S."/>
            <person name="Johnson J."/>
            <person name="Steglich C."/>
            <person name="Church G.M."/>
            <person name="Richardson P."/>
            <person name="Chisholm S.W."/>
        </authorList>
    </citation>
    <scope>NUCLEOTIDE SEQUENCE [LARGE SCALE GENOMIC DNA]</scope>
    <source>
        <strain>AS9601</strain>
    </source>
</reference>
<gene>
    <name evidence="1" type="primary">ndhM</name>
    <name type="ordered locus">A9601_01621</name>
</gene>
<name>NDHM_PROMS</name>
<accession>A2BNT9</accession>
<organism>
    <name type="scientific">Prochlorococcus marinus (strain AS9601)</name>
    <dbReference type="NCBI Taxonomy" id="146891"/>
    <lineage>
        <taxon>Bacteria</taxon>
        <taxon>Bacillati</taxon>
        <taxon>Cyanobacteriota</taxon>
        <taxon>Cyanophyceae</taxon>
        <taxon>Synechococcales</taxon>
        <taxon>Prochlorococcaceae</taxon>
        <taxon>Prochlorococcus</taxon>
    </lineage>
</organism>
<evidence type="ECO:0000255" key="1">
    <source>
        <dbReference type="HAMAP-Rule" id="MF_01352"/>
    </source>
</evidence>
<dbReference type="EC" id="7.1.1.-" evidence="1"/>
<dbReference type="EMBL" id="CP000551">
    <property type="protein sequence ID" value="ABM69450.1"/>
    <property type="molecule type" value="Genomic_DNA"/>
</dbReference>
<dbReference type="RefSeq" id="WP_011817637.1">
    <property type="nucleotide sequence ID" value="NC_008816.1"/>
</dbReference>
<dbReference type="SMR" id="A2BNT9"/>
<dbReference type="STRING" id="146891.A9601_01621"/>
<dbReference type="KEGG" id="pmb:A9601_01621"/>
<dbReference type="eggNOG" id="ENOG5031AQM">
    <property type="taxonomic scope" value="Bacteria"/>
</dbReference>
<dbReference type="HOGENOM" id="CLU_137431_0_0_3"/>
<dbReference type="OrthoDB" id="461686at2"/>
<dbReference type="Proteomes" id="UP000002590">
    <property type="component" value="Chromosome"/>
</dbReference>
<dbReference type="GO" id="GO:0031676">
    <property type="term" value="C:plasma membrane-derived thylakoid membrane"/>
    <property type="evidence" value="ECO:0007669"/>
    <property type="project" value="UniProtKB-SubCell"/>
</dbReference>
<dbReference type="GO" id="GO:0016655">
    <property type="term" value="F:oxidoreductase activity, acting on NAD(P)H, quinone or similar compound as acceptor"/>
    <property type="evidence" value="ECO:0007669"/>
    <property type="project" value="UniProtKB-UniRule"/>
</dbReference>
<dbReference type="GO" id="GO:0048038">
    <property type="term" value="F:quinone binding"/>
    <property type="evidence" value="ECO:0007669"/>
    <property type="project" value="UniProtKB-KW"/>
</dbReference>
<dbReference type="HAMAP" id="MF_01352">
    <property type="entry name" value="NDH1_NDH1M"/>
    <property type="match status" value="1"/>
</dbReference>
<dbReference type="InterPro" id="IPR018922">
    <property type="entry name" value="NdhM"/>
</dbReference>
<dbReference type="PANTHER" id="PTHR36900">
    <property type="entry name" value="NAD(P)H-QUINONE OXIDOREDUCTASE SUBUNIT M, CHLOROPLASTIC"/>
    <property type="match status" value="1"/>
</dbReference>
<dbReference type="PANTHER" id="PTHR36900:SF1">
    <property type="entry name" value="NAD(P)H-QUINONE OXIDOREDUCTASE SUBUNIT M, CHLOROPLASTIC"/>
    <property type="match status" value="1"/>
</dbReference>
<dbReference type="Pfam" id="PF10664">
    <property type="entry name" value="NdhM"/>
    <property type="match status" value="1"/>
</dbReference>
<comment type="function">
    <text evidence="1">NDH-1 shuttles electrons from an unknown electron donor, via FMN and iron-sulfur (Fe-S) centers, to quinones in the respiratory and/or the photosynthetic chain. The immediate electron acceptor for the enzyme in this species is believed to be plastoquinone. Couples the redox reaction to proton translocation, and thus conserves the redox energy in a proton gradient. Cyanobacterial NDH-1 also plays a role in inorganic carbon-concentration.</text>
</comment>
<comment type="catalytic activity">
    <reaction evidence="1">
        <text>a plastoquinone + NADH + (n+1) H(+)(in) = a plastoquinol + NAD(+) + n H(+)(out)</text>
        <dbReference type="Rhea" id="RHEA:42608"/>
        <dbReference type="Rhea" id="RHEA-COMP:9561"/>
        <dbReference type="Rhea" id="RHEA-COMP:9562"/>
        <dbReference type="ChEBI" id="CHEBI:15378"/>
        <dbReference type="ChEBI" id="CHEBI:17757"/>
        <dbReference type="ChEBI" id="CHEBI:57540"/>
        <dbReference type="ChEBI" id="CHEBI:57945"/>
        <dbReference type="ChEBI" id="CHEBI:62192"/>
    </reaction>
</comment>
<comment type="catalytic activity">
    <reaction evidence="1">
        <text>a plastoquinone + NADPH + (n+1) H(+)(in) = a plastoquinol + NADP(+) + n H(+)(out)</text>
        <dbReference type="Rhea" id="RHEA:42612"/>
        <dbReference type="Rhea" id="RHEA-COMP:9561"/>
        <dbReference type="Rhea" id="RHEA-COMP:9562"/>
        <dbReference type="ChEBI" id="CHEBI:15378"/>
        <dbReference type="ChEBI" id="CHEBI:17757"/>
        <dbReference type="ChEBI" id="CHEBI:57783"/>
        <dbReference type="ChEBI" id="CHEBI:58349"/>
        <dbReference type="ChEBI" id="CHEBI:62192"/>
    </reaction>
</comment>
<comment type="subunit">
    <text evidence="1">NDH-1 can be composed of about 15 different subunits; different subcomplexes with different compositions have been identified which probably have different functions.</text>
</comment>
<comment type="subcellular location">
    <subcellularLocation>
        <location evidence="1">Cellular thylakoid membrane</location>
        <topology evidence="1">Peripheral membrane protein</topology>
        <orientation evidence="1">Cytoplasmic side</orientation>
    </subcellularLocation>
</comment>
<comment type="similarity">
    <text evidence="1">Belongs to the complex I NdhM subunit family.</text>
</comment>